<gene>
    <name evidence="1" type="primary">lplA</name>
    <name type="ordered locus">EcHS_A4621</name>
</gene>
<name>LPLA_ECOHS</name>
<protein>
    <recommendedName>
        <fullName evidence="1">Lipoate-protein ligase A</fullName>
        <ecNumber evidence="1">6.3.1.20</ecNumber>
    </recommendedName>
    <alternativeName>
        <fullName evidence="1">Lipoate--protein ligase</fullName>
    </alternativeName>
</protein>
<organism>
    <name type="scientific">Escherichia coli O9:H4 (strain HS)</name>
    <dbReference type="NCBI Taxonomy" id="331112"/>
    <lineage>
        <taxon>Bacteria</taxon>
        <taxon>Pseudomonadati</taxon>
        <taxon>Pseudomonadota</taxon>
        <taxon>Gammaproteobacteria</taxon>
        <taxon>Enterobacterales</taxon>
        <taxon>Enterobacteriaceae</taxon>
        <taxon>Escherichia</taxon>
    </lineage>
</organism>
<keyword id="KW-0067">ATP-binding</keyword>
<keyword id="KW-0963">Cytoplasm</keyword>
<keyword id="KW-0436">Ligase</keyword>
<keyword id="KW-0547">Nucleotide-binding</keyword>
<dbReference type="EC" id="6.3.1.20" evidence="1"/>
<dbReference type="EMBL" id="CP000802">
    <property type="protein sequence ID" value="ABV08768.1"/>
    <property type="molecule type" value="Genomic_DNA"/>
</dbReference>
<dbReference type="RefSeq" id="WP_000105861.1">
    <property type="nucleotide sequence ID" value="NC_009800.1"/>
</dbReference>
<dbReference type="SMR" id="A8A8B4"/>
<dbReference type="KEGG" id="ecx:EcHS_A4621"/>
<dbReference type="HOGENOM" id="CLU_022986_0_1_6"/>
<dbReference type="UniPathway" id="UPA00537">
    <property type="reaction ID" value="UER00594"/>
</dbReference>
<dbReference type="UniPathway" id="UPA00537">
    <property type="reaction ID" value="UER00595"/>
</dbReference>
<dbReference type="GO" id="GO:0005829">
    <property type="term" value="C:cytosol"/>
    <property type="evidence" value="ECO:0007669"/>
    <property type="project" value="TreeGrafter"/>
</dbReference>
<dbReference type="GO" id="GO:0005524">
    <property type="term" value="F:ATP binding"/>
    <property type="evidence" value="ECO:0007669"/>
    <property type="project" value="UniProtKB-KW"/>
</dbReference>
<dbReference type="GO" id="GO:0016979">
    <property type="term" value="F:lipoate-protein ligase activity"/>
    <property type="evidence" value="ECO:0007669"/>
    <property type="project" value="UniProtKB-UniRule"/>
</dbReference>
<dbReference type="GO" id="GO:0017118">
    <property type="term" value="F:lipoyltransferase activity"/>
    <property type="evidence" value="ECO:0007669"/>
    <property type="project" value="TreeGrafter"/>
</dbReference>
<dbReference type="GO" id="GO:0036211">
    <property type="term" value="P:protein modification process"/>
    <property type="evidence" value="ECO:0007669"/>
    <property type="project" value="InterPro"/>
</dbReference>
<dbReference type="CDD" id="cd16435">
    <property type="entry name" value="BPL_LplA_LipB"/>
    <property type="match status" value="1"/>
</dbReference>
<dbReference type="FunFam" id="3.30.390.50:FF:000002">
    <property type="entry name" value="Lipoate-protein ligase A"/>
    <property type="match status" value="1"/>
</dbReference>
<dbReference type="FunFam" id="3.30.930.10:FF:000024">
    <property type="entry name" value="Lipoate-protein ligase A"/>
    <property type="match status" value="1"/>
</dbReference>
<dbReference type="Gene3D" id="3.30.930.10">
    <property type="entry name" value="Bira Bifunctional Protein, Domain 2"/>
    <property type="match status" value="1"/>
</dbReference>
<dbReference type="Gene3D" id="3.30.390.50">
    <property type="entry name" value="CO dehydrogenase flavoprotein, C-terminal domain"/>
    <property type="match status" value="1"/>
</dbReference>
<dbReference type="HAMAP" id="MF_01602">
    <property type="entry name" value="LplA"/>
    <property type="match status" value="1"/>
</dbReference>
<dbReference type="InterPro" id="IPR045864">
    <property type="entry name" value="aa-tRNA-synth_II/BPL/LPL"/>
</dbReference>
<dbReference type="InterPro" id="IPR004143">
    <property type="entry name" value="BPL_LPL_catalytic"/>
</dbReference>
<dbReference type="InterPro" id="IPR023741">
    <property type="entry name" value="Lipoate_ligase_A"/>
</dbReference>
<dbReference type="InterPro" id="IPR019491">
    <property type="entry name" value="Lipoate_protein_ligase_C"/>
</dbReference>
<dbReference type="InterPro" id="IPR004562">
    <property type="entry name" value="LipoylTrfase_LipoateP_Ligase"/>
</dbReference>
<dbReference type="NCBIfam" id="TIGR00545">
    <property type="entry name" value="lipoyltrans"/>
    <property type="match status" value="1"/>
</dbReference>
<dbReference type="PANTHER" id="PTHR12561">
    <property type="entry name" value="LIPOATE-PROTEIN LIGASE"/>
    <property type="match status" value="1"/>
</dbReference>
<dbReference type="PANTHER" id="PTHR12561:SF3">
    <property type="entry name" value="LIPOYLTRANSFERASE 1, MITOCHONDRIAL"/>
    <property type="match status" value="1"/>
</dbReference>
<dbReference type="Pfam" id="PF10437">
    <property type="entry name" value="Lip_prot_lig_C"/>
    <property type="match status" value="1"/>
</dbReference>
<dbReference type="Pfam" id="PF21948">
    <property type="entry name" value="LplA-B_cat"/>
    <property type="match status" value="1"/>
</dbReference>
<dbReference type="SUPFAM" id="SSF55681">
    <property type="entry name" value="Class II aaRS and biotin synthetases"/>
    <property type="match status" value="1"/>
</dbReference>
<dbReference type="SUPFAM" id="SSF82649">
    <property type="entry name" value="SufE/NifU"/>
    <property type="match status" value="1"/>
</dbReference>
<dbReference type="PROSITE" id="PS51733">
    <property type="entry name" value="BPL_LPL_CATALYTIC"/>
    <property type="match status" value="1"/>
</dbReference>
<accession>A8A8B4</accession>
<reference key="1">
    <citation type="journal article" date="2008" name="J. Bacteriol.">
        <title>The pangenome structure of Escherichia coli: comparative genomic analysis of E. coli commensal and pathogenic isolates.</title>
        <authorList>
            <person name="Rasko D.A."/>
            <person name="Rosovitz M.J."/>
            <person name="Myers G.S.A."/>
            <person name="Mongodin E.F."/>
            <person name="Fricke W.F."/>
            <person name="Gajer P."/>
            <person name="Crabtree J."/>
            <person name="Sebaihia M."/>
            <person name="Thomson N.R."/>
            <person name="Chaudhuri R."/>
            <person name="Henderson I.R."/>
            <person name="Sperandio V."/>
            <person name="Ravel J."/>
        </authorList>
    </citation>
    <scope>NUCLEOTIDE SEQUENCE [LARGE SCALE GENOMIC DNA]</scope>
    <source>
        <strain>HS</strain>
    </source>
</reference>
<sequence>MSTLRLLISDSYDPWFNLAVEECIFRQMPATQRVLFLWRNADTVVIGRAQNPWKECNTRRMEEDNVRLARRSSGGGAVFHDLGNTCFTFMAGKPEYDKTISTSIVLNALNALGVSAEASGRNDLVVKTAEGDRKVSGSAYRETKDRGFHHGTLLLNADLSRLANYLNPDKKKLAAKGITSVRSRVTNLTELLPGITHEQVCEAITKAFFAHYGERVEAEIISPDKTPDLPNFAETFARQSSWEWNFGQAPAFSHLLDERFSWGGVELHFDVEKGHITRAQVFTDSLNPAPLEALAGRLQGCLYRADMLQQECEALLVDFPDQEKELRELSTWIAGAVR</sequence>
<proteinExistence type="inferred from homology"/>
<evidence type="ECO:0000255" key="1">
    <source>
        <dbReference type="HAMAP-Rule" id="MF_01602"/>
    </source>
</evidence>
<evidence type="ECO:0000255" key="2">
    <source>
        <dbReference type="PROSITE-ProRule" id="PRU01067"/>
    </source>
</evidence>
<comment type="function">
    <text evidence="1">Catalyzes both the ATP-dependent activation of exogenously supplied lipoate to lipoyl-AMP and the transfer of the activated lipoyl onto the lipoyl domains of lipoate-dependent enzymes.</text>
</comment>
<comment type="catalytic activity">
    <reaction evidence="1">
        <text>L-lysyl-[lipoyl-carrier protein] + (R)-lipoate + ATP = N(6)-[(R)-lipoyl]-L-lysyl-[lipoyl-carrier protein] + AMP + diphosphate + H(+)</text>
        <dbReference type="Rhea" id="RHEA:49288"/>
        <dbReference type="Rhea" id="RHEA-COMP:10500"/>
        <dbReference type="Rhea" id="RHEA-COMP:10502"/>
        <dbReference type="ChEBI" id="CHEBI:15378"/>
        <dbReference type="ChEBI" id="CHEBI:29969"/>
        <dbReference type="ChEBI" id="CHEBI:30616"/>
        <dbReference type="ChEBI" id="CHEBI:33019"/>
        <dbReference type="ChEBI" id="CHEBI:83088"/>
        <dbReference type="ChEBI" id="CHEBI:83099"/>
        <dbReference type="ChEBI" id="CHEBI:456215"/>
        <dbReference type="EC" id="6.3.1.20"/>
    </reaction>
</comment>
<comment type="pathway">
    <text evidence="1">Protein modification; protein lipoylation via exogenous pathway; protein N(6)-(lipoyl)lysine from lipoate: step 1/2.</text>
</comment>
<comment type="pathway">
    <text evidence="1">Protein modification; protein lipoylation via exogenous pathway; protein N(6)-(lipoyl)lysine from lipoate: step 2/2.</text>
</comment>
<comment type="subunit">
    <text evidence="1">Monomer.</text>
</comment>
<comment type="subcellular location">
    <subcellularLocation>
        <location evidence="1">Cytoplasm</location>
    </subcellularLocation>
</comment>
<comment type="miscellaneous">
    <text evidence="1">In the transfer reaction, the free carboxyl group of lipoic acid is attached via an amide linkage to the epsilon-amino group of a specific lysine residue of lipoyl domains of lipoate-dependent enzymes.</text>
</comment>
<comment type="similarity">
    <text evidence="1">Belongs to the LplA family.</text>
</comment>
<feature type="chain" id="PRO_1000069378" description="Lipoate-protein ligase A">
    <location>
        <begin position="1"/>
        <end position="338"/>
    </location>
</feature>
<feature type="domain" description="BPL/LPL catalytic" evidence="2">
    <location>
        <begin position="29"/>
        <end position="216"/>
    </location>
</feature>
<feature type="binding site" evidence="1">
    <location>
        <position position="71"/>
    </location>
    <ligand>
        <name>ATP</name>
        <dbReference type="ChEBI" id="CHEBI:30616"/>
    </ligand>
</feature>
<feature type="binding site" evidence="1">
    <location>
        <begin position="76"/>
        <end position="79"/>
    </location>
    <ligand>
        <name>ATP</name>
        <dbReference type="ChEBI" id="CHEBI:30616"/>
    </ligand>
</feature>
<feature type="binding site" evidence="1">
    <location>
        <position position="134"/>
    </location>
    <ligand>
        <name>(R)-lipoate</name>
        <dbReference type="ChEBI" id="CHEBI:83088"/>
    </ligand>
</feature>
<feature type="binding site" evidence="1">
    <location>
        <position position="134"/>
    </location>
    <ligand>
        <name>ATP</name>
        <dbReference type="ChEBI" id="CHEBI:30616"/>
    </ligand>
</feature>